<accession>Q2QPW2</accession>
<accession>A0A0N7KU42</accession>
<keyword id="KW-0040">ANK repeat</keyword>
<keyword id="KW-0238">DNA-binding</keyword>
<keyword id="KW-0479">Metal-binding</keyword>
<keyword id="KW-1185">Reference proteome</keyword>
<keyword id="KW-0677">Repeat</keyword>
<keyword id="KW-0862">Zinc</keyword>
<keyword id="KW-0863">Zinc-finger</keyword>
<reference key="1">
    <citation type="journal article" date="2005" name="BMC Biol.">
        <title>The sequence of rice chromosomes 11 and 12, rich in disease resistance genes and recent gene duplications.</title>
        <authorList>
            <consortium name="The rice chromosomes 11 and 12 sequencing consortia"/>
        </authorList>
    </citation>
    <scope>NUCLEOTIDE SEQUENCE [LARGE SCALE GENOMIC DNA]</scope>
    <source>
        <strain>cv. Nipponbare</strain>
    </source>
</reference>
<reference key="2">
    <citation type="journal article" date="2005" name="Nature">
        <title>The map-based sequence of the rice genome.</title>
        <authorList>
            <consortium name="International rice genome sequencing project (IRGSP)"/>
        </authorList>
    </citation>
    <scope>NUCLEOTIDE SEQUENCE [LARGE SCALE GENOMIC DNA]</scope>
    <source>
        <strain>cv. Nipponbare</strain>
    </source>
</reference>
<reference key="3">
    <citation type="journal article" date="2008" name="Nucleic Acids Res.">
        <title>The rice annotation project database (RAP-DB): 2008 update.</title>
        <authorList>
            <consortium name="The rice annotation project (RAP)"/>
        </authorList>
    </citation>
    <scope>GENOME REANNOTATION</scope>
    <source>
        <strain>cv. Nipponbare</strain>
    </source>
</reference>
<reference key="4">
    <citation type="journal article" date="2013" name="Rice">
        <title>Improvement of the Oryza sativa Nipponbare reference genome using next generation sequence and optical map data.</title>
        <authorList>
            <person name="Kawahara Y."/>
            <person name="de la Bastide M."/>
            <person name="Hamilton J.P."/>
            <person name="Kanamori H."/>
            <person name="McCombie W.R."/>
            <person name="Ouyang S."/>
            <person name="Schwartz D.C."/>
            <person name="Tanaka T."/>
            <person name="Wu J."/>
            <person name="Zhou S."/>
            <person name="Childs K.L."/>
            <person name="Davidson R.M."/>
            <person name="Lin H."/>
            <person name="Quesada-Ocampo L."/>
            <person name="Vaillancourt B."/>
            <person name="Sakai H."/>
            <person name="Lee S.S."/>
            <person name="Kim J."/>
            <person name="Numa H."/>
            <person name="Itoh T."/>
            <person name="Buell C.R."/>
            <person name="Matsumoto T."/>
        </authorList>
    </citation>
    <scope>GENOME REANNOTATION</scope>
    <source>
        <strain>cv. Nipponbare</strain>
    </source>
</reference>
<reference key="5">
    <citation type="submission" date="2007-09" db="EMBL/GenBank/DDBJ databases">
        <title>Oryza sativa full length cDNA.</title>
        <authorList>
            <consortium name="The rice full-length cDNA consortium"/>
        </authorList>
    </citation>
    <scope>NUCLEOTIDE SEQUENCE [LARGE SCALE MRNA]</scope>
    <source>
        <strain>cv. Nipponbare</strain>
    </source>
</reference>
<reference key="6">
    <citation type="journal article" date="2008" name="BMC Genomics">
        <title>Genome-wide analysis of CCCH zinc finger family in Arabidopsis and rice.</title>
        <authorList>
            <person name="Wang D."/>
            <person name="Guo Y."/>
            <person name="Wu C."/>
            <person name="Yang G."/>
            <person name="Li Y."/>
            <person name="Zheng C."/>
        </authorList>
    </citation>
    <scope>NOMENCLATURE</scope>
</reference>
<sequence>MGEPGGAEAAVSARLLELAADDNAAGLGELLAAWPSLADEPAPWYTPARGAEPLTPLMVAAVYGSVGCLDALLSPPYLVDPNRASASSLSTPLHLAAAGGSASAPAAVSRLLAAGADPALLDHLQRRASDLVALPPNSLPLKNHLLSLLGARKEWPPDPSLPDIKNGAYASDDFRMYSFKVRACSRAYSHDWTECPFVHPGENARRRDPRKYHYSCVPCPEFKKGAGCRRGDMCEYAHGVFESWLHPAQYRTRLCKDGVGCARRVCFFAHTPDELRPLYVSTGSAVPSPRGALEMAAAAAAMGMGLSSPGSSSFTPPLSPSAGGGGGGGGGSGGGGAWPQQPSVPALCLPGSAGNLHLSRLRTSLSARDMAVDELLAAAAAAADYDGLVASPASIRSARGKALVPSNLDELFSAELAAAAASRSPRYADQGGAAFSPTRKATVLNQFQLQQQHSLLSPRAAAVTPEPVSPMSSRLLAALAQREKMQQQTLRSMSSRDLGNAASLLVGSPVSSSMSKWGFPSGNPDWGADDEELGRLKRCSSFELRSGAANGNHEPDLSWVNTLVKEPTPEKMMTTTSAMDSIGILGQNTSRDHIVGGEDDTAGVISSWLEQLQLDEMVV</sequence>
<protein>
    <recommendedName>
        <fullName>Zinc finger CCCH domain-containing protein 67</fullName>
        <shortName>OsC3H67</shortName>
    </recommendedName>
</protein>
<feature type="chain" id="PRO_0000346858" description="Zinc finger CCCH domain-containing protein 67">
    <location>
        <begin position="1"/>
        <end position="619"/>
    </location>
</feature>
<feature type="repeat" description="ANK 1">
    <location>
        <begin position="52"/>
        <end position="81"/>
    </location>
</feature>
<feature type="repeat" description="ANK 2">
    <location>
        <begin position="88"/>
        <end position="120"/>
    </location>
</feature>
<feature type="zinc finger region" description="C3H1-type 1" evidence="1">
    <location>
        <begin position="213"/>
        <end position="241"/>
    </location>
</feature>
<feature type="zinc finger region" description="C3H1-type 2" evidence="1">
    <location>
        <begin position="249"/>
        <end position="273"/>
    </location>
</feature>
<feature type="region of interest" description="Disordered" evidence="2">
    <location>
        <begin position="308"/>
        <end position="341"/>
    </location>
</feature>
<feature type="compositionally biased region" description="Gly residues" evidence="2">
    <location>
        <begin position="322"/>
        <end position="337"/>
    </location>
</feature>
<gene>
    <name type="ordered locus">Os12g0515500</name>
    <name type="ordered locus">LOC_Os12g33090</name>
</gene>
<evidence type="ECO:0000255" key="1">
    <source>
        <dbReference type="PROSITE-ProRule" id="PRU00723"/>
    </source>
</evidence>
<evidence type="ECO:0000256" key="2">
    <source>
        <dbReference type="SAM" id="MobiDB-lite"/>
    </source>
</evidence>
<name>C3H67_ORYSJ</name>
<organism>
    <name type="scientific">Oryza sativa subsp. japonica</name>
    <name type="common">Rice</name>
    <dbReference type="NCBI Taxonomy" id="39947"/>
    <lineage>
        <taxon>Eukaryota</taxon>
        <taxon>Viridiplantae</taxon>
        <taxon>Streptophyta</taxon>
        <taxon>Embryophyta</taxon>
        <taxon>Tracheophyta</taxon>
        <taxon>Spermatophyta</taxon>
        <taxon>Magnoliopsida</taxon>
        <taxon>Liliopsida</taxon>
        <taxon>Poales</taxon>
        <taxon>Poaceae</taxon>
        <taxon>BOP clade</taxon>
        <taxon>Oryzoideae</taxon>
        <taxon>Oryzeae</taxon>
        <taxon>Oryzinae</taxon>
        <taxon>Oryza</taxon>
        <taxon>Oryza sativa</taxon>
    </lineage>
</organism>
<proteinExistence type="evidence at transcript level"/>
<dbReference type="EMBL" id="DP000011">
    <property type="protein sequence ID" value="ABA98705.1"/>
    <property type="molecule type" value="Genomic_DNA"/>
</dbReference>
<dbReference type="EMBL" id="AP008218">
    <property type="protein sequence ID" value="BAF29905.1"/>
    <property type="molecule type" value="Genomic_DNA"/>
</dbReference>
<dbReference type="EMBL" id="AP014968">
    <property type="protein sequence ID" value="BAT17370.1"/>
    <property type="molecule type" value="Genomic_DNA"/>
</dbReference>
<dbReference type="EMBL" id="AK287452">
    <property type="status" value="NOT_ANNOTATED_CDS"/>
    <property type="molecule type" value="mRNA"/>
</dbReference>
<dbReference type="RefSeq" id="XP_015620786.1">
    <property type="nucleotide sequence ID" value="XM_015765300.1"/>
</dbReference>
<dbReference type="SMR" id="Q2QPW2"/>
<dbReference type="FunCoup" id="Q2QPW2">
    <property type="interactions" value="42"/>
</dbReference>
<dbReference type="STRING" id="39947.Q2QPW2"/>
<dbReference type="iPTMnet" id="Q2QPW2"/>
<dbReference type="PaxDb" id="39947-Q2QPW2"/>
<dbReference type="EnsemblPlants" id="Os12t0515500-01">
    <property type="protein sequence ID" value="Os12t0515500-01"/>
    <property type="gene ID" value="Os12g0515500"/>
</dbReference>
<dbReference type="Gramene" id="Os12t0515500-01">
    <property type="protein sequence ID" value="Os12t0515500-01"/>
    <property type="gene ID" value="Os12g0515500"/>
</dbReference>
<dbReference type="KEGG" id="dosa:Os12g0515500"/>
<dbReference type="eggNOG" id="KOG1595">
    <property type="taxonomic scope" value="Eukaryota"/>
</dbReference>
<dbReference type="HOGENOM" id="CLU_015068_1_0_1"/>
<dbReference type="InParanoid" id="Q2QPW2"/>
<dbReference type="OMA" id="TVLNQFQ"/>
<dbReference type="OrthoDB" id="410307at2759"/>
<dbReference type="Proteomes" id="UP000000763">
    <property type="component" value="Chromosome 12"/>
</dbReference>
<dbReference type="Proteomes" id="UP000059680">
    <property type="component" value="Chromosome 12"/>
</dbReference>
<dbReference type="GO" id="GO:0003677">
    <property type="term" value="F:DNA binding"/>
    <property type="evidence" value="ECO:0007669"/>
    <property type="project" value="UniProtKB-KW"/>
</dbReference>
<dbReference type="GO" id="GO:0008270">
    <property type="term" value="F:zinc ion binding"/>
    <property type="evidence" value="ECO:0007669"/>
    <property type="project" value="UniProtKB-KW"/>
</dbReference>
<dbReference type="GO" id="GO:0010468">
    <property type="term" value="P:regulation of gene expression"/>
    <property type="evidence" value="ECO:0007669"/>
    <property type="project" value="UniProtKB-ARBA"/>
</dbReference>
<dbReference type="FunFam" id="3.30.1370.210:FF:000009">
    <property type="entry name" value="Zinc finger CCCH domain-containing protein 66"/>
    <property type="match status" value="1"/>
</dbReference>
<dbReference type="Gene3D" id="3.30.1370.210">
    <property type="match status" value="1"/>
</dbReference>
<dbReference type="Gene3D" id="1.25.40.20">
    <property type="entry name" value="Ankyrin repeat-containing domain"/>
    <property type="match status" value="1"/>
</dbReference>
<dbReference type="InterPro" id="IPR002110">
    <property type="entry name" value="Ankyrin_rpt"/>
</dbReference>
<dbReference type="InterPro" id="IPR036770">
    <property type="entry name" value="Ankyrin_rpt-contain_sf"/>
</dbReference>
<dbReference type="InterPro" id="IPR045234">
    <property type="entry name" value="Unkempt-like"/>
</dbReference>
<dbReference type="InterPro" id="IPR000571">
    <property type="entry name" value="Znf_CCCH"/>
</dbReference>
<dbReference type="PANTHER" id="PTHR14493">
    <property type="entry name" value="UNKEMPT FAMILY MEMBER"/>
    <property type="match status" value="1"/>
</dbReference>
<dbReference type="PANTHER" id="PTHR14493:SF123">
    <property type="entry name" value="ZINC FINGER CCCH DOMAIN-CONTAINING PROTEIN 67"/>
    <property type="match status" value="1"/>
</dbReference>
<dbReference type="Pfam" id="PF00023">
    <property type="entry name" value="Ank"/>
    <property type="match status" value="1"/>
</dbReference>
<dbReference type="Pfam" id="PF25512">
    <property type="entry name" value="zf-CCCH_AtC3H23"/>
    <property type="match status" value="1"/>
</dbReference>
<dbReference type="SMART" id="SM00356">
    <property type="entry name" value="ZnF_C3H1"/>
    <property type="match status" value="2"/>
</dbReference>
<dbReference type="SUPFAM" id="SSF48403">
    <property type="entry name" value="Ankyrin repeat"/>
    <property type="match status" value="1"/>
</dbReference>
<dbReference type="PROSITE" id="PS50297">
    <property type="entry name" value="ANK_REP_REGION"/>
    <property type="match status" value="1"/>
</dbReference>
<dbReference type="PROSITE" id="PS50088">
    <property type="entry name" value="ANK_REPEAT"/>
    <property type="match status" value="1"/>
</dbReference>
<dbReference type="PROSITE" id="PS50103">
    <property type="entry name" value="ZF_C3H1"/>
    <property type="match status" value="2"/>
</dbReference>